<protein>
    <recommendedName>
        <fullName evidence="1">Hydroxyethylthiazole kinase</fullName>
        <ecNumber evidence="1">2.7.1.50</ecNumber>
    </recommendedName>
    <alternativeName>
        <fullName evidence="1">4-methyl-5-beta-hydroxyethylthiazole kinase</fullName>
        <shortName evidence="1">TH kinase</shortName>
        <shortName evidence="1">Thz kinase</shortName>
    </alternativeName>
</protein>
<feature type="chain" id="PRO_0000383869" description="Hydroxyethylthiazole kinase">
    <location>
        <begin position="1"/>
        <end position="280"/>
    </location>
</feature>
<feature type="binding site" evidence="1">
    <location>
        <position position="50"/>
    </location>
    <ligand>
        <name>substrate</name>
    </ligand>
</feature>
<feature type="binding site" evidence="1">
    <location>
        <position position="125"/>
    </location>
    <ligand>
        <name>ATP</name>
        <dbReference type="ChEBI" id="CHEBI:30616"/>
    </ligand>
</feature>
<feature type="binding site" evidence="1">
    <location>
        <position position="178"/>
    </location>
    <ligand>
        <name>ATP</name>
        <dbReference type="ChEBI" id="CHEBI:30616"/>
    </ligand>
</feature>
<feature type="binding site" evidence="1">
    <location>
        <position position="205"/>
    </location>
    <ligand>
        <name>substrate</name>
    </ligand>
</feature>
<evidence type="ECO:0000255" key="1">
    <source>
        <dbReference type="HAMAP-Rule" id="MF_00228"/>
    </source>
</evidence>
<comment type="function">
    <text evidence="1">Catalyzes the phosphorylation of the hydroxyl group of 4-methyl-5-beta-hydroxyethylthiazole (THZ).</text>
</comment>
<comment type="catalytic activity">
    <reaction evidence="1">
        <text>5-(2-hydroxyethyl)-4-methylthiazole + ATP = 4-methyl-5-(2-phosphooxyethyl)-thiazole + ADP + H(+)</text>
        <dbReference type="Rhea" id="RHEA:24212"/>
        <dbReference type="ChEBI" id="CHEBI:15378"/>
        <dbReference type="ChEBI" id="CHEBI:17957"/>
        <dbReference type="ChEBI" id="CHEBI:30616"/>
        <dbReference type="ChEBI" id="CHEBI:58296"/>
        <dbReference type="ChEBI" id="CHEBI:456216"/>
        <dbReference type="EC" id="2.7.1.50"/>
    </reaction>
</comment>
<comment type="cofactor">
    <cofactor evidence="1">
        <name>Mg(2+)</name>
        <dbReference type="ChEBI" id="CHEBI:18420"/>
    </cofactor>
</comment>
<comment type="pathway">
    <text evidence="1">Cofactor biosynthesis; thiamine diphosphate biosynthesis; 4-methyl-5-(2-phosphoethyl)-thiazole from 5-(2-hydroxyethyl)-4-methylthiazole: step 1/1.</text>
</comment>
<comment type="similarity">
    <text evidence="1">Belongs to the Thz kinase family.</text>
</comment>
<sequence>MSKAITDVFYTAFKTALPLTSSPLVQCITNEITVESMANALLYIDAKPVMADDQREFPEFFAQSDALLLNLGHISEVRQQNLLAAGKFAQATNQPTVIDLVGVSATQLRYDLGHQLLVNHPNVVKGNISEMRRFADLKSTGRGVDGSQLDQSVTALGELAASLQQLTQAFPTTTFLATGKIDLVVSAKGTWYLKNGVPQLDRFTGTGDIVGALIAALLGTGLDNDAAVVVAVSYFNCCGEVAAAQNRTGGLAAFREGTLNQLSLLAATADWLQMVKGEAL</sequence>
<gene>
    <name evidence="1" type="primary">thiM</name>
    <name type="ordered locus">LSEI_0299</name>
</gene>
<reference key="1">
    <citation type="journal article" date="2006" name="Proc. Natl. Acad. Sci. U.S.A.">
        <title>Comparative genomics of the lactic acid bacteria.</title>
        <authorList>
            <person name="Makarova K.S."/>
            <person name="Slesarev A."/>
            <person name="Wolf Y.I."/>
            <person name="Sorokin A."/>
            <person name="Mirkin B."/>
            <person name="Koonin E.V."/>
            <person name="Pavlov A."/>
            <person name="Pavlova N."/>
            <person name="Karamychev V."/>
            <person name="Polouchine N."/>
            <person name="Shakhova V."/>
            <person name="Grigoriev I."/>
            <person name="Lou Y."/>
            <person name="Rohksar D."/>
            <person name="Lucas S."/>
            <person name="Huang K."/>
            <person name="Goodstein D.M."/>
            <person name="Hawkins T."/>
            <person name="Plengvidhya V."/>
            <person name="Welker D."/>
            <person name="Hughes J."/>
            <person name="Goh Y."/>
            <person name="Benson A."/>
            <person name="Baldwin K."/>
            <person name="Lee J.-H."/>
            <person name="Diaz-Muniz I."/>
            <person name="Dosti B."/>
            <person name="Smeianov V."/>
            <person name="Wechter W."/>
            <person name="Barabote R."/>
            <person name="Lorca G."/>
            <person name="Altermann E."/>
            <person name="Barrangou R."/>
            <person name="Ganesan B."/>
            <person name="Xie Y."/>
            <person name="Rawsthorne H."/>
            <person name="Tamir D."/>
            <person name="Parker C."/>
            <person name="Breidt F."/>
            <person name="Broadbent J.R."/>
            <person name="Hutkins R."/>
            <person name="O'Sullivan D."/>
            <person name="Steele J."/>
            <person name="Unlu G."/>
            <person name="Saier M.H. Jr."/>
            <person name="Klaenhammer T."/>
            <person name="Richardson P."/>
            <person name="Kozyavkin S."/>
            <person name="Weimer B.C."/>
            <person name="Mills D.A."/>
        </authorList>
    </citation>
    <scope>NUCLEOTIDE SEQUENCE [LARGE SCALE GENOMIC DNA]</scope>
    <source>
        <strain>ATCC 334 / BCRC 17002 / CCUG 31169 / CIP 107868 / KCTC 3260 / NRRL B-441</strain>
    </source>
</reference>
<keyword id="KW-0067">ATP-binding</keyword>
<keyword id="KW-0418">Kinase</keyword>
<keyword id="KW-0460">Magnesium</keyword>
<keyword id="KW-0479">Metal-binding</keyword>
<keyword id="KW-0547">Nucleotide-binding</keyword>
<keyword id="KW-1185">Reference proteome</keyword>
<keyword id="KW-0784">Thiamine biosynthesis</keyword>
<keyword id="KW-0808">Transferase</keyword>
<organism>
    <name type="scientific">Lacticaseibacillus paracasei (strain ATCC 334 / BCRC 17002 / CCUG 31169 / CIP 107868 / KCTC 3260 / NRRL B-441)</name>
    <name type="common">Lactobacillus paracasei</name>
    <dbReference type="NCBI Taxonomy" id="321967"/>
    <lineage>
        <taxon>Bacteria</taxon>
        <taxon>Bacillati</taxon>
        <taxon>Bacillota</taxon>
        <taxon>Bacilli</taxon>
        <taxon>Lactobacillales</taxon>
        <taxon>Lactobacillaceae</taxon>
        <taxon>Lacticaseibacillus</taxon>
    </lineage>
</organism>
<dbReference type="EC" id="2.7.1.50" evidence="1"/>
<dbReference type="EMBL" id="CP000423">
    <property type="protein sequence ID" value="ABJ69159.1"/>
    <property type="molecule type" value="Genomic_DNA"/>
</dbReference>
<dbReference type="RefSeq" id="WP_011674046.1">
    <property type="nucleotide sequence ID" value="NC_008526.1"/>
</dbReference>
<dbReference type="RefSeq" id="YP_805601.1">
    <property type="nucleotide sequence ID" value="NC_008526.1"/>
</dbReference>
<dbReference type="SMR" id="Q03CB3"/>
<dbReference type="STRING" id="321967.LSEI_0299"/>
<dbReference type="PaxDb" id="321967-LSEI_0299"/>
<dbReference type="KEGG" id="lca:LSEI_0299"/>
<dbReference type="PATRIC" id="fig|321967.11.peg.323"/>
<dbReference type="HOGENOM" id="CLU_019943_0_0_9"/>
<dbReference type="UniPathway" id="UPA00060">
    <property type="reaction ID" value="UER00139"/>
</dbReference>
<dbReference type="Proteomes" id="UP000001651">
    <property type="component" value="Chromosome"/>
</dbReference>
<dbReference type="GO" id="GO:0005524">
    <property type="term" value="F:ATP binding"/>
    <property type="evidence" value="ECO:0007669"/>
    <property type="project" value="UniProtKB-UniRule"/>
</dbReference>
<dbReference type="GO" id="GO:0004417">
    <property type="term" value="F:hydroxyethylthiazole kinase activity"/>
    <property type="evidence" value="ECO:0007669"/>
    <property type="project" value="UniProtKB-UniRule"/>
</dbReference>
<dbReference type="GO" id="GO:0000287">
    <property type="term" value="F:magnesium ion binding"/>
    <property type="evidence" value="ECO:0007669"/>
    <property type="project" value="UniProtKB-UniRule"/>
</dbReference>
<dbReference type="GO" id="GO:0009228">
    <property type="term" value="P:thiamine biosynthetic process"/>
    <property type="evidence" value="ECO:0007669"/>
    <property type="project" value="UniProtKB-KW"/>
</dbReference>
<dbReference type="GO" id="GO:0009229">
    <property type="term" value="P:thiamine diphosphate biosynthetic process"/>
    <property type="evidence" value="ECO:0007669"/>
    <property type="project" value="UniProtKB-UniRule"/>
</dbReference>
<dbReference type="CDD" id="cd01170">
    <property type="entry name" value="THZ_kinase"/>
    <property type="match status" value="1"/>
</dbReference>
<dbReference type="Gene3D" id="3.40.1190.20">
    <property type="match status" value="1"/>
</dbReference>
<dbReference type="HAMAP" id="MF_00228">
    <property type="entry name" value="Thz_kinase"/>
    <property type="match status" value="1"/>
</dbReference>
<dbReference type="InterPro" id="IPR000417">
    <property type="entry name" value="Hyethyz_kinase"/>
</dbReference>
<dbReference type="InterPro" id="IPR029056">
    <property type="entry name" value="Ribokinase-like"/>
</dbReference>
<dbReference type="Pfam" id="PF02110">
    <property type="entry name" value="HK"/>
    <property type="match status" value="1"/>
</dbReference>
<dbReference type="PIRSF" id="PIRSF000513">
    <property type="entry name" value="Thz_kinase"/>
    <property type="match status" value="1"/>
</dbReference>
<dbReference type="PRINTS" id="PR01099">
    <property type="entry name" value="HYETHTZKNASE"/>
</dbReference>
<dbReference type="SUPFAM" id="SSF53613">
    <property type="entry name" value="Ribokinase-like"/>
    <property type="match status" value="1"/>
</dbReference>
<accession>Q03CB3</accession>
<proteinExistence type="inferred from homology"/>
<name>THIM_LACP3</name>